<feature type="chain" id="PRO_0000130700" description="Large ribosomal subunit protein uL24">
    <location>
        <begin position="1"/>
        <end position="102"/>
    </location>
</feature>
<keyword id="KW-1185">Reference proteome</keyword>
<keyword id="KW-0687">Ribonucleoprotein</keyword>
<keyword id="KW-0689">Ribosomal protein</keyword>
<keyword id="KW-0694">RNA-binding</keyword>
<keyword id="KW-0699">rRNA-binding</keyword>
<name>RL24_RALN1</name>
<gene>
    <name evidence="1" type="primary">rplX</name>
    <name type="ordered locus">RSc3008</name>
    <name type="ORF">RS01081</name>
</gene>
<dbReference type="EMBL" id="AL646052">
    <property type="protein sequence ID" value="CAD16717.1"/>
    <property type="molecule type" value="Genomic_DNA"/>
</dbReference>
<dbReference type="RefSeq" id="WP_011002909.1">
    <property type="nucleotide sequence ID" value="NC_003295.1"/>
</dbReference>
<dbReference type="SMR" id="Q8XV23"/>
<dbReference type="STRING" id="267608.RSc3008"/>
<dbReference type="EnsemblBacteria" id="CAD16717">
    <property type="protein sequence ID" value="CAD16717"/>
    <property type="gene ID" value="RSc3008"/>
</dbReference>
<dbReference type="KEGG" id="rso:RSc3008"/>
<dbReference type="eggNOG" id="COG0198">
    <property type="taxonomic scope" value="Bacteria"/>
</dbReference>
<dbReference type="HOGENOM" id="CLU_093315_2_2_4"/>
<dbReference type="Proteomes" id="UP000001436">
    <property type="component" value="Chromosome"/>
</dbReference>
<dbReference type="GO" id="GO:1990904">
    <property type="term" value="C:ribonucleoprotein complex"/>
    <property type="evidence" value="ECO:0007669"/>
    <property type="project" value="UniProtKB-KW"/>
</dbReference>
<dbReference type="GO" id="GO:0005840">
    <property type="term" value="C:ribosome"/>
    <property type="evidence" value="ECO:0007669"/>
    <property type="project" value="UniProtKB-KW"/>
</dbReference>
<dbReference type="GO" id="GO:0019843">
    <property type="term" value="F:rRNA binding"/>
    <property type="evidence" value="ECO:0007669"/>
    <property type="project" value="UniProtKB-UniRule"/>
</dbReference>
<dbReference type="GO" id="GO:0003735">
    <property type="term" value="F:structural constituent of ribosome"/>
    <property type="evidence" value="ECO:0007669"/>
    <property type="project" value="InterPro"/>
</dbReference>
<dbReference type="GO" id="GO:0006412">
    <property type="term" value="P:translation"/>
    <property type="evidence" value="ECO:0007669"/>
    <property type="project" value="UniProtKB-UniRule"/>
</dbReference>
<dbReference type="CDD" id="cd06089">
    <property type="entry name" value="KOW_RPL26"/>
    <property type="match status" value="1"/>
</dbReference>
<dbReference type="Gene3D" id="2.30.30.30">
    <property type="match status" value="1"/>
</dbReference>
<dbReference type="HAMAP" id="MF_01326_B">
    <property type="entry name" value="Ribosomal_uL24_B"/>
    <property type="match status" value="1"/>
</dbReference>
<dbReference type="InterPro" id="IPR005824">
    <property type="entry name" value="KOW"/>
</dbReference>
<dbReference type="InterPro" id="IPR014722">
    <property type="entry name" value="Rib_uL2_dom2"/>
</dbReference>
<dbReference type="InterPro" id="IPR003256">
    <property type="entry name" value="Ribosomal_uL24"/>
</dbReference>
<dbReference type="InterPro" id="IPR041988">
    <property type="entry name" value="Ribosomal_uL24_KOW"/>
</dbReference>
<dbReference type="InterPro" id="IPR008991">
    <property type="entry name" value="Translation_prot_SH3-like_sf"/>
</dbReference>
<dbReference type="NCBIfam" id="TIGR01079">
    <property type="entry name" value="rplX_bact"/>
    <property type="match status" value="1"/>
</dbReference>
<dbReference type="PANTHER" id="PTHR12903">
    <property type="entry name" value="MITOCHONDRIAL RIBOSOMAL PROTEIN L24"/>
    <property type="match status" value="1"/>
</dbReference>
<dbReference type="Pfam" id="PF00467">
    <property type="entry name" value="KOW"/>
    <property type="match status" value="1"/>
</dbReference>
<dbReference type="Pfam" id="PF17136">
    <property type="entry name" value="ribosomal_L24"/>
    <property type="match status" value="1"/>
</dbReference>
<dbReference type="SMART" id="SM00739">
    <property type="entry name" value="KOW"/>
    <property type="match status" value="1"/>
</dbReference>
<dbReference type="SUPFAM" id="SSF50104">
    <property type="entry name" value="Translation proteins SH3-like domain"/>
    <property type="match status" value="1"/>
</dbReference>
<accession>Q8XV23</accession>
<comment type="function">
    <text evidence="1">One of two assembly initiator proteins, it binds directly to the 5'-end of the 23S rRNA, where it nucleates assembly of the 50S subunit.</text>
</comment>
<comment type="function">
    <text evidence="1">One of the proteins that surrounds the polypeptide exit tunnel on the outside of the subunit.</text>
</comment>
<comment type="subunit">
    <text evidence="1">Part of the 50S ribosomal subunit.</text>
</comment>
<comment type="similarity">
    <text evidence="1">Belongs to the universal ribosomal protein uL24 family.</text>
</comment>
<protein>
    <recommendedName>
        <fullName evidence="1">Large ribosomal subunit protein uL24</fullName>
    </recommendedName>
    <alternativeName>
        <fullName evidence="2">50S ribosomal protein L24</fullName>
    </alternativeName>
</protein>
<reference key="1">
    <citation type="journal article" date="2002" name="Nature">
        <title>Genome sequence of the plant pathogen Ralstonia solanacearum.</title>
        <authorList>
            <person name="Salanoubat M."/>
            <person name="Genin S."/>
            <person name="Artiguenave F."/>
            <person name="Gouzy J."/>
            <person name="Mangenot S."/>
            <person name="Arlat M."/>
            <person name="Billault A."/>
            <person name="Brottier P."/>
            <person name="Camus J.-C."/>
            <person name="Cattolico L."/>
            <person name="Chandler M."/>
            <person name="Choisne N."/>
            <person name="Claudel-Renard C."/>
            <person name="Cunnac S."/>
            <person name="Demange N."/>
            <person name="Gaspin C."/>
            <person name="Lavie M."/>
            <person name="Moisan A."/>
            <person name="Robert C."/>
            <person name="Saurin W."/>
            <person name="Schiex T."/>
            <person name="Siguier P."/>
            <person name="Thebault P."/>
            <person name="Whalen M."/>
            <person name="Wincker P."/>
            <person name="Levy M."/>
            <person name="Weissenbach J."/>
            <person name="Boucher C.A."/>
        </authorList>
    </citation>
    <scope>NUCLEOTIDE SEQUENCE [LARGE SCALE GENOMIC DNA]</scope>
    <source>
        <strain>ATCC BAA-1114 / GMI1000</strain>
    </source>
</reference>
<organism>
    <name type="scientific">Ralstonia nicotianae (strain ATCC BAA-1114 / GMI1000)</name>
    <name type="common">Ralstonia solanacearum</name>
    <dbReference type="NCBI Taxonomy" id="267608"/>
    <lineage>
        <taxon>Bacteria</taxon>
        <taxon>Pseudomonadati</taxon>
        <taxon>Pseudomonadota</taxon>
        <taxon>Betaproteobacteria</taxon>
        <taxon>Burkholderiales</taxon>
        <taxon>Burkholderiaceae</taxon>
        <taxon>Ralstonia</taxon>
        <taxon>Ralstonia solanacearum species complex</taxon>
    </lineage>
</organism>
<evidence type="ECO:0000255" key="1">
    <source>
        <dbReference type="HAMAP-Rule" id="MF_01326"/>
    </source>
</evidence>
<evidence type="ECO:0000305" key="2"/>
<proteinExistence type="inferred from homology"/>
<sequence>MNKIRKGDRVIVRTGKDKGKQGTVLAVLGEHVTVEGVNVAKKHVRPNPMLGTTGGVVDKVMPIHISNVALVDANGKPSRVGIKVENGVKTRVLKTTGAAVGA</sequence>